<sequence>MIDVLGPEKRRRRTTQEKIAIVQQSFEPGMTVSLVARQHGVAASQLFLWRKQYQEGSLTAVAAGEQVVPASELAAAMKQIKELQRLLGKKTMENELLKEAVEYGRAKKWIAHAPLLPGDGE</sequence>
<feature type="chain" id="PRO_0000393454" description="Transposase InsC for insertion element IS2 on F plasmid">
    <location>
        <begin position="1"/>
        <end position="121"/>
    </location>
</feature>
<evidence type="ECO:0000305" key="1"/>
<name>INSC7_ECOLI</name>
<keyword id="KW-0233">DNA recombination</keyword>
<keyword id="KW-0238">DNA-binding</keyword>
<keyword id="KW-0614">Plasmid</keyword>
<keyword id="KW-0814">Transposable element</keyword>
<keyword id="KW-0815">Transposition</keyword>
<reference key="1">
    <citation type="submission" date="2000-04" db="EMBL/GenBank/DDBJ databases">
        <title>Complete nucleotide sequence of the F plasmid: its implications for organization and diversification of plasmid genomes.</title>
        <authorList>
            <person name="Shimizu H."/>
            <person name="Saitoh Y."/>
            <person name="Suda Y."/>
            <person name="Uehara K."/>
            <person name="Sampei G."/>
            <person name="Mizobuchi K."/>
        </authorList>
    </citation>
    <scope>NUCLEOTIDE SEQUENCE [LARGE SCALE GENOMIC DNA]</scope>
    <source>
        <strain>K12 / CR63</strain>
        <plasmid>F</plasmid>
    </source>
</reference>
<gene>
    <name type="primary">insC7</name>
    <name type="synonym">ybiA</name>
    <name type="synonym">yuaJ</name>
    <name type="ordered locus">ECOK12F021</name>
</gene>
<proteinExistence type="inferred from homology"/>
<geneLocation type="plasmid">
    <name>F</name>
</geneLocation>
<protein>
    <recommendedName>
        <fullName>Transposase InsC for insertion element IS2 on F plasmid</fullName>
    </recommendedName>
</protein>
<comment type="function">
    <text>Involved in the transposition of the insertion sequence IS2.</text>
</comment>
<comment type="similarity">
    <text evidence="1">Belongs to the transposase 8 family.</text>
</comment>
<comment type="sequence caution" evidence="1">
    <conflict type="erroneous initiation">
        <sequence resource="EMBL-CDS" id="BAA97891"/>
    </conflict>
    <text>Extended N-terminus.</text>
</comment>
<dbReference type="EMBL" id="AP001918">
    <property type="protein sequence ID" value="BAA97891.1"/>
    <property type="status" value="ALT_INIT"/>
    <property type="molecule type" value="Genomic_DNA"/>
</dbReference>
<dbReference type="RefSeq" id="NP_061400.3">
    <property type="nucleotide sequence ID" value="NC_002483.1"/>
</dbReference>
<dbReference type="SMR" id="P0CF46"/>
<dbReference type="KEGG" id="ecoc:C3026_00670"/>
<dbReference type="KEGG" id="ecoc:C3026_03840"/>
<dbReference type="KEGG" id="ecoc:C3026_06235"/>
<dbReference type="KEGG" id="ecoc:C3026_08180"/>
<dbReference type="KEGG" id="ecoc:C3026_09100"/>
<dbReference type="KEGG" id="ecoc:C3026_11265"/>
<dbReference type="KEGG" id="ecoc:C3026_15305"/>
<dbReference type="KEGG" id="ecoc:C3026_15700"/>
<dbReference type="KEGG" id="ecoc:C3026_16625"/>
<dbReference type="KEGG" id="ecoc:C3026_20340"/>
<dbReference type="KEGG" id="ecoc:C3026_23040"/>
<dbReference type="KEGG" id="ecoc:C3026_24220"/>
<dbReference type="PhylomeDB" id="P0CF46"/>
<dbReference type="PRO" id="PR:P0CF46"/>
<dbReference type="GO" id="GO:0003677">
    <property type="term" value="F:DNA binding"/>
    <property type="evidence" value="ECO:0007669"/>
    <property type="project" value="UniProtKB-KW"/>
</dbReference>
<dbReference type="GO" id="GO:0004803">
    <property type="term" value="F:transposase activity"/>
    <property type="evidence" value="ECO:0007669"/>
    <property type="project" value="InterPro"/>
</dbReference>
<dbReference type="GO" id="GO:0006313">
    <property type="term" value="P:DNA transposition"/>
    <property type="evidence" value="ECO:0007669"/>
    <property type="project" value="InterPro"/>
</dbReference>
<dbReference type="Gene3D" id="1.10.10.10">
    <property type="entry name" value="Winged helix-like DNA-binding domain superfamily/Winged helix DNA-binding domain"/>
    <property type="match status" value="1"/>
</dbReference>
<dbReference type="InterPro" id="IPR009057">
    <property type="entry name" value="Homeodomain-like_sf"/>
</dbReference>
<dbReference type="InterPro" id="IPR002514">
    <property type="entry name" value="Transposase_8"/>
</dbReference>
<dbReference type="InterPro" id="IPR036388">
    <property type="entry name" value="WH-like_DNA-bd_sf"/>
</dbReference>
<dbReference type="NCBIfam" id="NF006928">
    <property type="entry name" value="PRK09413.1"/>
    <property type="match status" value="1"/>
</dbReference>
<dbReference type="PANTHER" id="PTHR37936">
    <property type="entry name" value="TRANSPOSASE INSC FOR INSERTION ELEMENT IS2A-RELATED"/>
    <property type="match status" value="1"/>
</dbReference>
<dbReference type="PANTHER" id="PTHR37936:SF3">
    <property type="entry name" value="TRANSPOSASE INSC FOR INSERTION ELEMENT IS2A-RELATED"/>
    <property type="match status" value="1"/>
</dbReference>
<dbReference type="Pfam" id="PF01527">
    <property type="entry name" value="HTH_Tnp_1"/>
    <property type="match status" value="1"/>
</dbReference>
<dbReference type="SUPFAM" id="SSF46689">
    <property type="entry name" value="Homeodomain-like"/>
    <property type="match status" value="1"/>
</dbReference>
<organism>
    <name type="scientific">Escherichia coli (strain K12)</name>
    <dbReference type="NCBI Taxonomy" id="83333"/>
    <lineage>
        <taxon>Bacteria</taxon>
        <taxon>Pseudomonadati</taxon>
        <taxon>Pseudomonadota</taxon>
        <taxon>Gammaproteobacteria</taxon>
        <taxon>Enterobacterales</taxon>
        <taxon>Enterobacteriaceae</taxon>
        <taxon>Escherichia</taxon>
    </lineage>
</organism>
<accession>P0CF46</accession>
<accession>O07989</accession>
<accession>O08018</accession>
<accession>O08019</accession>
<accession>P0C5W2</accession>
<accession>P19776</accession>
<accession>P76357</accession>
<accession>P77346</accession>
<accession>Q2MBI5</accession>
<accession>Q2MC65</accession>
<accession>Q79BJ2</accession>
<accession>Q9JMT0</accession>